<feature type="chain" id="PRO_0000235623" description="5'-nucleotidase SurE">
    <location>
        <begin position="1"/>
        <end position="260"/>
    </location>
</feature>
<feature type="binding site" evidence="1">
    <location>
        <position position="19"/>
    </location>
    <ligand>
        <name>a divalent metal cation</name>
        <dbReference type="ChEBI" id="CHEBI:60240"/>
    </ligand>
</feature>
<feature type="binding site" evidence="1">
    <location>
        <position position="20"/>
    </location>
    <ligand>
        <name>a divalent metal cation</name>
        <dbReference type="ChEBI" id="CHEBI:60240"/>
    </ligand>
</feature>
<feature type="binding site" evidence="1">
    <location>
        <position position="51"/>
    </location>
    <ligand>
        <name>a divalent metal cation</name>
        <dbReference type="ChEBI" id="CHEBI:60240"/>
    </ligand>
</feature>
<feature type="binding site" evidence="1">
    <location>
        <position position="104"/>
    </location>
    <ligand>
        <name>a divalent metal cation</name>
        <dbReference type="ChEBI" id="CHEBI:60240"/>
    </ligand>
</feature>
<name>SURE_PARM1</name>
<proteinExistence type="inferred from homology"/>
<sequence>MTFPPVADPSSLRILISNDDGINAPGIKVLERIARTLSKDVWVVAPETEQSAAGHSLTIRRPLRVRKVSARRYAVDGTPTDSVLLGVNHVLKGKKPDLVLSGINRGANLGEDVTYSGTVAAAMEGTILGIPAIALSQTLEHPHPVKWGTVEHWAPDVIRRLLAKGWSRNVLINVNFPDVIAASVTGIEITRQGKRKIGDEIMERHDPRGEAYVWIGAQRAEDRSKPGTDIEAVFRGAISVTPLCFDLTHRDDMKALETAF</sequence>
<protein>
    <recommendedName>
        <fullName evidence="1">5'-nucleotidase SurE</fullName>
        <ecNumber evidence="1">3.1.3.5</ecNumber>
    </recommendedName>
    <alternativeName>
        <fullName evidence="1">Nucleoside 5'-monophosphate phosphohydrolase</fullName>
    </alternativeName>
</protein>
<organism>
    <name type="scientific">Paramagnetospirillum magneticum (strain ATCC 700264 / AMB-1)</name>
    <name type="common">Magnetospirillum magneticum</name>
    <dbReference type="NCBI Taxonomy" id="342108"/>
    <lineage>
        <taxon>Bacteria</taxon>
        <taxon>Pseudomonadati</taxon>
        <taxon>Pseudomonadota</taxon>
        <taxon>Alphaproteobacteria</taxon>
        <taxon>Rhodospirillales</taxon>
        <taxon>Magnetospirillaceae</taxon>
        <taxon>Paramagnetospirillum</taxon>
    </lineage>
</organism>
<keyword id="KW-0963">Cytoplasm</keyword>
<keyword id="KW-0378">Hydrolase</keyword>
<keyword id="KW-0479">Metal-binding</keyword>
<keyword id="KW-0547">Nucleotide-binding</keyword>
<evidence type="ECO:0000255" key="1">
    <source>
        <dbReference type="HAMAP-Rule" id="MF_00060"/>
    </source>
</evidence>
<dbReference type="EC" id="3.1.3.5" evidence="1"/>
<dbReference type="EMBL" id="AP007255">
    <property type="protein sequence ID" value="BAE51324.1"/>
    <property type="molecule type" value="Genomic_DNA"/>
</dbReference>
<dbReference type="RefSeq" id="WP_011384901.1">
    <property type="nucleotide sequence ID" value="NC_007626.1"/>
</dbReference>
<dbReference type="SMR" id="Q2W4A1"/>
<dbReference type="STRING" id="342108.amb2520"/>
<dbReference type="KEGG" id="mag:amb2520"/>
<dbReference type="HOGENOM" id="CLU_045192_1_2_5"/>
<dbReference type="OrthoDB" id="9780815at2"/>
<dbReference type="Proteomes" id="UP000007058">
    <property type="component" value="Chromosome"/>
</dbReference>
<dbReference type="GO" id="GO:0005737">
    <property type="term" value="C:cytoplasm"/>
    <property type="evidence" value="ECO:0007669"/>
    <property type="project" value="UniProtKB-SubCell"/>
</dbReference>
<dbReference type="GO" id="GO:0008254">
    <property type="term" value="F:3'-nucleotidase activity"/>
    <property type="evidence" value="ECO:0007669"/>
    <property type="project" value="TreeGrafter"/>
</dbReference>
<dbReference type="GO" id="GO:0008253">
    <property type="term" value="F:5'-nucleotidase activity"/>
    <property type="evidence" value="ECO:0007669"/>
    <property type="project" value="UniProtKB-UniRule"/>
</dbReference>
<dbReference type="GO" id="GO:0004309">
    <property type="term" value="F:exopolyphosphatase activity"/>
    <property type="evidence" value="ECO:0007669"/>
    <property type="project" value="TreeGrafter"/>
</dbReference>
<dbReference type="GO" id="GO:0046872">
    <property type="term" value="F:metal ion binding"/>
    <property type="evidence" value="ECO:0007669"/>
    <property type="project" value="UniProtKB-UniRule"/>
</dbReference>
<dbReference type="GO" id="GO:0000166">
    <property type="term" value="F:nucleotide binding"/>
    <property type="evidence" value="ECO:0007669"/>
    <property type="project" value="UniProtKB-KW"/>
</dbReference>
<dbReference type="FunFam" id="3.40.1210.10:FF:000001">
    <property type="entry name" value="5'/3'-nucleotidase SurE"/>
    <property type="match status" value="1"/>
</dbReference>
<dbReference type="Gene3D" id="3.40.1210.10">
    <property type="entry name" value="Survival protein SurE-like phosphatase/nucleotidase"/>
    <property type="match status" value="1"/>
</dbReference>
<dbReference type="HAMAP" id="MF_00060">
    <property type="entry name" value="SurE"/>
    <property type="match status" value="1"/>
</dbReference>
<dbReference type="InterPro" id="IPR030048">
    <property type="entry name" value="SurE"/>
</dbReference>
<dbReference type="InterPro" id="IPR002828">
    <property type="entry name" value="SurE-like_Pase/nucleotidase"/>
</dbReference>
<dbReference type="InterPro" id="IPR036523">
    <property type="entry name" value="SurE-like_sf"/>
</dbReference>
<dbReference type="NCBIfam" id="NF001490">
    <property type="entry name" value="PRK00346.1-4"/>
    <property type="match status" value="1"/>
</dbReference>
<dbReference type="NCBIfam" id="TIGR00087">
    <property type="entry name" value="surE"/>
    <property type="match status" value="1"/>
</dbReference>
<dbReference type="PANTHER" id="PTHR30457">
    <property type="entry name" value="5'-NUCLEOTIDASE SURE"/>
    <property type="match status" value="1"/>
</dbReference>
<dbReference type="PANTHER" id="PTHR30457:SF12">
    <property type="entry name" value="5'_3'-NUCLEOTIDASE SURE"/>
    <property type="match status" value="1"/>
</dbReference>
<dbReference type="Pfam" id="PF01975">
    <property type="entry name" value="SurE"/>
    <property type="match status" value="1"/>
</dbReference>
<dbReference type="SUPFAM" id="SSF64167">
    <property type="entry name" value="SurE-like"/>
    <property type="match status" value="1"/>
</dbReference>
<comment type="function">
    <text evidence="1">Nucleotidase that shows phosphatase activity on nucleoside 5'-monophosphates.</text>
</comment>
<comment type="catalytic activity">
    <reaction evidence="1">
        <text>a ribonucleoside 5'-phosphate + H2O = a ribonucleoside + phosphate</text>
        <dbReference type="Rhea" id="RHEA:12484"/>
        <dbReference type="ChEBI" id="CHEBI:15377"/>
        <dbReference type="ChEBI" id="CHEBI:18254"/>
        <dbReference type="ChEBI" id="CHEBI:43474"/>
        <dbReference type="ChEBI" id="CHEBI:58043"/>
        <dbReference type="EC" id="3.1.3.5"/>
    </reaction>
</comment>
<comment type="cofactor">
    <cofactor evidence="1">
        <name>a divalent metal cation</name>
        <dbReference type="ChEBI" id="CHEBI:60240"/>
    </cofactor>
    <text evidence="1">Binds 1 divalent metal cation per subunit.</text>
</comment>
<comment type="subcellular location">
    <subcellularLocation>
        <location evidence="1">Cytoplasm</location>
    </subcellularLocation>
</comment>
<comment type="similarity">
    <text evidence="1">Belongs to the SurE nucleotidase family.</text>
</comment>
<reference key="1">
    <citation type="journal article" date="2005" name="DNA Res.">
        <title>Complete genome sequence of the facultative anaerobic magnetotactic bacterium Magnetospirillum sp. strain AMB-1.</title>
        <authorList>
            <person name="Matsunaga T."/>
            <person name="Okamura Y."/>
            <person name="Fukuda Y."/>
            <person name="Wahyudi A.T."/>
            <person name="Murase Y."/>
            <person name="Takeyama H."/>
        </authorList>
    </citation>
    <scope>NUCLEOTIDE SEQUENCE [LARGE SCALE GENOMIC DNA]</scope>
    <source>
        <strain>ATCC 700264 / AMB-1</strain>
    </source>
</reference>
<gene>
    <name evidence="1" type="primary">surE</name>
    <name type="ordered locus">amb2520</name>
</gene>
<accession>Q2W4A1</accession>